<proteinExistence type="inferred from homology"/>
<sequence>MSVYGLQRLYIGGGYVDATSGKTFDTFDPATGELLAQVQQASAADVDRAVASAREGQREWAAMTAMQRSRILRRAVDLLRERNDELAAIETRDTGKPIGETLAVDIVTGADVIEYYAGLATAIEGLQVPLRAESFVYTRREPLGVCAGIGAWNYPIQIACWKTAPALAAGNAMVFKPSEVTPLTALKLAEIYTEAGVPAGVFNVVQGDGSVGALLTGHPDIAKVSFTGGVETGKKVMSLAGASSLKEVTMELGGKSPLIVFEDADLDRAADIAVTANFFSSGQVCTNGTRVFVHRSVKDAFTQRVLERVKRIRVGKPTDAATNFGPLVSAAQLDKVLGFIDSGKAEGAKLLAGGTRLTDGHFASGQYVAPTVFGDCRDDMKIVREEIFGPVMSILDFESEDEVIARANDTHYGLAAGVVTENLSRAHRTIHRLEAGICWINTWGESPAEMPVGGYKQSGVGRENGITTLEHYTRIKSVQVELGRYNPVF</sequence>
<comment type="function">
    <text evidence="1">Involved in the biosynthesis of the osmoprotectant glycine betaine. Catalyzes the irreversible oxidation of betaine aldehyde to the corresponding acid.</text>
</comment>
<comment type="catalytic activity">
    <reaction evidence="1">
        <text>betaine aldehyde + NAD(+) + H2O = glycine betaine + NADH + 2 H(+)</text>
        <dbReference type="Rhea" id="RHEA:15305"/>
        <dbReference type="ChEBI" id="CHEBI:15377"/>
        <dbReference type="ChEBI" id="CHEBI:15378"/>
        <dbReference type="ChEBI" id="CHEBI:15710"/>
        <dbReference type="ChEBI" id="CHEBI:17750"/>
        <dbReference type="ChEBI" id="CHEBI:57540"/>
        <dbReference type="ChEBI" id="CHEBI:57945"/>
        <dbReference type="EC" id="1.2.1.8"/>
    </reaction>
    <physiologicalReaction direction="left-to-right" evidence="1">
        <dbReference type="Rhea" id="RHEA:15306"/>
    </physiologicalReaction>
</comment>
<comment type="cofactor">
    <cofactor evidence="1">
        <name>K(+)</name>
        <dbReference type="ChEBI" id="CHEBI:29103"/>
    </cofactor>
    <text evidence="1">Binds 2 potassium ions per subunit.</text>
</comment>
<comment type="pathway">
    <text evidence="1">Amine and polyamine biosynthesis; betaine biosynthesis via choline pathway; betaine from betaine aldehyde: step 1/1.</text>
</comment>
<comment type="subunit">
    <text evidence="1">Dimer of dimers.</text>
</comment>
<comment type="similarity">
    <text evidence="1">Belongs to the aldehyde dehydrogenase family.</text>
</comment>
<organism>
    <name type="scientific">Burkholderia ambifaria (strain ATCC BAA-244 / DSM 16087 / CCUG 44356 / LMG 19182 / AMMD)</name>
    <name type="common">Burkholderia cepacia (strain AMMD)</name>
    <dbReference type="NCBI Taxonomy" id="339670"/>
    <lineage>
        <taxon>Bacteria</taxon>
        <taxon>Pseudomonadati</taxon>
        <taxon>Pseudomonadota</taxon>
        <taxon>Betaproteobacteria</taxon>
        <taxon>Burkholderiales</taxon>
        <taxon>Burkholderiaceae</taxon>
        <taxon>Burkholderia</taxon>
        <taxon>Burkholderia cepacia complex</taxon>
    </lineage>
</organism>
<feature type="chain" id="PRO_1000047033" description="Betaine aldehyde dehydrogenase">
    <location>
        <begin position="1"/>
        <end position="489"/>
    </location>
</feature>
<feature type="active site" description="Charge relay system" evidence="1">
    <location>
        <position position="162"/>
    </location>
</feature>
<feature type="active site" description="Proton acceptor" evidence="1">
    <location>
        <position position="251"/>
    </location>
</feature>
<feature type="active site" description="Nucleophile" evidence="1">
    <location>
        <position position="285"/>
    </location>
</feature>
<feature type="active site" description="Charge relay system" evidence="1">
    <location>
        <position position="463"/>
    </location>
</feature>
<feature type="binding site" evidence="1">
    <location>
        <position position="26"/>
    </location>
    <ligand>
        <name>K(+)</name>
        <dbReference type="ChEBI" id="CHEBI:29103"/>
        <label>1</label>
    </ligand>
</feature>
<feature type="binding site" evidence="1">
    <location>
        <position position="93"/>
    </location>
    <ligand>
        <name>K(+)</name>
        <dbReference type="ChEBI" id="CHEBI:29103"/>
        <label>1</label>
    </ligand>
</feature>
<feature type="binding site" evidence="1">
    <location>
        <begin position="150"/>
        <end position="152"/>
    </location>
    <ligand>
        <name>NAD(+)</name>
        <dbReference type="ChEBI" id="CHEBI:57540"/>
    </ligand>
</feature>
<feature type="binding site" evidence="1">
    <location>
        <begin position="176"/>
        <end position="179"/>
    </location>
    <ligand>
        <name>NAD(+)</name>
        <dbReference type="ChEBI" id="CHEBI:57540"/>
    </ligand>
</feature>
<feature type="binding site" evidence="1">
    <location>
        <position position="180"/>
    </location>
    <ligand>
        <name>K(+)</name>
        <dbReference type="ChEBI" id="CHEBI:29103"/>
        <label>1</label>
    </ligand>
</feature>
<feature type="binding site" evidence="1">
    <location>
        <begin position="229"/>
        <end position="232"/>
    </location>
    <ligand>
        <name>NAD(+)</name>
        <dbReference type="ChEBI" id="CHEBI:57540"/>
    </ligand>
</feature>
<feature type="binding site" evidence="1">
    <location>
        <position position="245"/>
    </location>
    <ligand>
        <name>K(+)</name>
        <dbReference type="ChEBI" id="CHEBI:29103"/>
        <label>2</label>
    </ligand>
</feature>
<feature type="binding site" evidence="1">
    <location>
        <position position="253"/>
    </location>
    <ligand>
        <name>NAD(+)</name>
        <dbReference type="ChEBI" id="CHEBI:57540"/>
    </ligand>
</feature>
<feature type="binding site" description="covalent" evidence="1">
    <location>
        <position position="285"/>
    </location>
    <ligand>
        <name>NAD(+)</name>
        <dbReference type="ChEBI" id="CHEBI:57540"/>
    </ligand>
</feature>
<feature type="binding site" evidence="1">
    <location>
        <position position="386"/>
    </location>
    <ligand>
        <name>NAD(+)</name>
        <dbReference type="ChEBI" id="CHEBI:57540"/>
    </ligand>
</feature>
<feature type="binding site" evidence="1">
    <location>
        <position position="456"/>
    </location>
    <ligand>
        <name>K(+)</name>
        <dbReference type="ChEBI" id="CHEBI:29103"/>
        <label>2</label>
    </ligand>
</feature>
<feature type="binding site" evidence="1">
    <location>
        <position position="459"/>
    </location>
    <ligand>
        <name>K(+)</name>
        <dbReference type="ChEBI" id="CHEBI:29103"/>
        <label>2</label>
    </ligand>
</feature>
<feature type="site" description="Seems to be a necessary countercharge to the potassium cations" evidence="1">
    <location>
        <position position="247"/>
    </location>
</feature>
<feature type="modified residue" description="Cysteine sulfenic acid (-SOH)" evidence="1">
    <location>
        <position position="285"/>
    </location>
</feature>
<dbReference type="EC" id="1.2.1.8" evidence="1"/>
<dbReference type="EMBL" id="CP000441">
    <property type="protein sequence ID" value="ABI90061.1"/>
    <property type="molecule type" value="Genomic_DNA"/>
</dbReference>
<dbReference type="RefSeq" id="WP_011659482.1">
    <property type="nucleotide sequence ID" value="NC_008391.1"/>
</dbReference>
<dbReference type="SMR" id="Q0B712"/>
<dbReference type="GeneID" id="93087471"/>
<dbReference type="KEGG" id="bam:Bamb_4511"/>
<dbReference type="PATRIC" id="fig|339670.21.peg.4845"/>
<dbReference type="eggNOG" id="COG1012">
    <property type="taxonomic scope" value="Bacteria"/>
</dbReference>
<dbReference type="UniPathway" id="UPA00529">
    <property type="reaction ID" value="UER00386"/>
</dbReference>
<dbReference type="Proteomes" id="UP000000662">
    <property type="component" value="Chromosome 2"/>
</dbReference>
<dbReference type="GO" id="GO:0008802">
    <property type="term" value="F:betaine-aldehyde dehydrogenase (NAD+) activity"/>
    <property type="evidence" value="ECO:0007669"/>
    <property type="project" value="UniProtKB-UniRule"/>
</dbReference>
<dbReference type="GO" id="GO:0046872">
    <property type="term" value="F:metal ion binding"/>
    <property type="evidence" value="ECO:0007669"/>
    <property type="project" value="UniProtKB-KW"/>
</dbReference>
<dbReference type="GO" id="GO:0019285">
    <property type="term" value="P:glycine betaine biosynthetic process from choline"/>
    <property type="evidence" value="ECO:0007669"/>
    <property type="project" value="UniProtKB-UniRule"/>
</dbReference>
<dbReference type="CDD" id="cd07090">
    <property type="entry name" value="ALDH_F9_TMBADH"/>
    <property type="match status" value="1"/>
</dbReference>
<dbReference type="FunFam" id="3.40.309.10:FF:000014">
    <property type="entry name" value="NAD/NADP-dependent betaine aldehyde dehydrogenase"/>
    <property type="match status" value="1"/>
</dbReference>
<dbReference type="FunFam" id="3.40.605.10:FF:000007">
    <property type="entry name" value="NAD/NADP-dependent betaine aldehyde dehydrogenase"/>
    <property type="match status" value="1"/>
</dbReference>
<dbReference type="Gene3D" id="3.40.605.10">
    <property type="entry name" value="Aldehyde Dehydrogenase, Chain A, domain 1"/>
    <property type="match status" value="1"/>
</dbReference>
<dbReference type="Gene3D" id="3.40.309.10">
    <property type="entry name" value="Aldehyde Dehydrogenase, Chain A, domain 2"/>
    <property type="match status" value="1"/>
</dbReference>
<dbReference type="HAMAP" id="MF_00804">
    <property type="entry name" value="BADH"/>
    <property type="match status" value="1"/>
</dbReference>
<dbReference type="InterPro" id="IPR016161">
    <property type="entry name" value="Ald_DH/histidinol_DH"/>
</dbReference>
<dbReference type="InterPro" id="IPR016163">
    <property type="entry name" value="Ald_DH_C"/>
</dbReference>
<dbReference type="InterPro" id="IPR016160">
    <property type="entry name" value="Ald_DH_CS_CYS"/>
</dbReference>
<dbReference type="InterPro" id="IPR029510">
    <property type="entry name" value="Ald_DH_CS_GLU"/>
</dbReference>
<dbReference type="InterPro" id="IPR016162">
    <property type="entry name" value="Ald_DH_N"/>
</dbReference>
<dbReference type="InterPro" id="IPR015590">
    <property type="entry name" value="Aldehyde_DH_dom"/>
</dbReference>
<dbReference type="InterPro" id="IPR011264">
    <property type="entry name" value="BADH"/>
</dbReference>
<dbReference type="NCBIfam" id="TIGR01804">
    <property type="entry name" value="BADH"/>
    <property type="match status" value="1"/>
</dbReference>
<dbReference type="NCBIfam" id="NF009725">
    <property type="entry name" value="PRK13252.1"/>
    <property type="match status" value="1"/>
</dbReference>
<dbReference type="PANTHER" id="PTHR11699">
    <property type="entry name" value="ALDEHYDE DEHYDROGENASE-RELATED"/>
    <property type="match status" value="1"/>
</dbReference>
<dbReference type="Pfam" id="PF00171">
    <property type="entry name" value="Aldedh"/>
    <property type="match status" value="1"/>
</dbReference>
<dbReference type="SUPFAM" id="SSF53720">
    <property type="entry name" value="ALDH-like"/>
    <property type="match status" value="1"/>
</dbReference>
<dbReference type="PROSITE" id="PS00070">
    <property type="entry name" value="ALDEHYDE_DEHYDR_CYS"/>
    <property type="match status" value="1"/>
</dbReference>
<dbReference type="PROSITE" id="PS00687">
    <property type="entry name" value="ALDEHYDE_DEHYDR_GLU"/>
    <property type="match status" value="1"/>
</dbReference>
<reference key="1">
    <citation type="submission" date="2006-08" db="EMBL/GenBank/DDBJ databases">
        <title>Complete sequence of chromosome 2 of Burkholderia cepacia AMMD.</title>
        <authorList>
            <person name="Copeland A."/>
            <person name="Lucas S."/>
            <person name="Lapidus A."/>
            <person name="Barry K."/>
            <person name="Detter J.C."/>
            <person name="Glavina del Rio T."/>
            <person name="Hammon N."/>
            <person name="Israni S."/>
            <person name="Pitluck S."/>
            <person name="Bruce D."/>
            <person name="Chain P."/>
            <person name="Malfatti S."/>
            <person name="Shin M."/>
            <person name="Vergez L."/>
            <person name="Schmutz J."/>
            <person name="Larimer F."/>
            <person name="Land M."/>
            <person name="Hauser L."/>
            <person name="Kyrpides N."/>
            <person name="Kim E."/>
            <person name="Parke J."/>
            <person name="Coenye T."/>
            <person name="Konstantinidis K."/>
            <person name="Ramette A."/>
            <person name="Tiedje J."/>
            <person name="Richardson P."/>
        </authorList>
    </citation>
    <scope>NUCLEOTIDE SEQUENCE [LARGE SCALE GENOMIC DNA]</scope>
    <source>
        <strain>ATCC BAA-244 / DSM 16087 / CCUG 44356 / LMG 19182 / AMMD</strain>
    </source>
</reference>
<name>BETB_BURCM</name>
<keyword id="KW-0479">Metal-binding</keyword>
<keyword id="KW-0520">NAD</keyword>
<keyword id="KW-0521">NADP</keyword>
<keyword id="KW-0558">Oxidation</keyword>
<keyword id="KW-0560">Oxidoreductase</keyword>
<keyword id="KW-0630">Potassium</keyword>
<accession>Q0B712</accession>
<evidence type="ECO:0000255" key="1">
    <source>
        <dbReference type="HAMAP-Rule" id="MF_00804"/>
    </source>
</evidence>
<protein>
    <recommendedName>
        <fullName evidence="1">Betaine aldehyde dehydrogenase</fullName>
        <shortName evidence="1">BADH</shortName>
        <ecNumber evidence="1">1.2.1.8</ecNumber>
    </recommendedName>
</protein>
<gene>
    <name evidence="1" type="primary">betB</name>
    <name type="ordered locus">Bamb_4511</name>
</gene>